<protein>
    <recommendedName>
        <fullName evidence="1">Glycine--tRNA ligase alpha subunit</fullName>
        <ecNumber evidence="1">6.1.1.14</ecNumber>
    </recommendedName>
    <alternativeName>
        <fullName evidence="1">Glycyl-tRNA synthetase alpha subunit</fullName>
        <shortName evidence="1">GlyRS</shortName>
    </alternativeName>
</protein>
<evidence type="ECO:0000255" key="1">
    <source>
        <dbReference type="HAMAP-Rule" id="MF_00254"/>
    </source>
</evidence>
<keyword id="KW-0030">Aminoacyl-tRNA synthetase</keyword>
<keyword id="KW-0067">ATP-binding</keyword>
<keyword id="KW-0963">Cytoplasm</keyword>
<keyword id="KW-0436">Ligase</keyword>
<keyword id="KW-0547">Nucleotide-binding</keyword>
<keyword id="KW-0648">Protein biosynthesis</keyword>
<reference key="1">
    <citation type="journal article" date="2009" name="J. Bacteriol.">
        <title>Complete and draft genome sequences of six members of the Aquificales.</title>
        <authorList>
            <person name="Reysenbach A.-L."/>
            <person name="Hamamura N."/>
            <person name="Podar M."/>
            <person name="Griffiths E."/>
            <person name="Ferreira S."/>
            <person name="Hochstein R."/>
            <person name="Heidelberg J."/>
            <person name="Johnson J."/>
            <person name="Mead D."/>
            <person name="Pohorille A."/>
            <person name="Sarmiento M."/>
            <person name="Schweighofer K."/>
            <person name="Seshadri R."/>
            <person name="Voytek M.A."/>
        </authorList>
    </citation>
    <scope>NUCLEOTIDE SEQUENCE [LARGE SCALE GENOMIC DNA]</scope>
    <source>
        <strain>YO3AOP1</strain>
    </source>
</reference>
<accession>B2V9P8</accession>
<sequence length="297" mass="34629">MTFQDIIMTLQKFWVEKGCILWQPYDIEVGAGTMNPATFLRVLGPEPWNVCYVEPSRRPKDGRYGENPNRLQHYYQFQVILKPTPENPHELYLESLQALGIDLTMHDIRFVEDDWESPTLGAWGLGWEVWLDGMEITQFTYFQQAGSLDLPEISVEITYGLERIATYLQGKDSVYDIVWAEGLTYGDIYKEAERQWSIHNFEVVDVDFLIKTFDMYEQEGYKLISLNLPIPAYDYALKCSHTFNLLDARGALSVNERARYIARVRNLARECAKAFVKHREELGYPLIKRRDDEVLST</sequence>
<comment type="catalytic activity">
    <reaction evidence="1">
        <text>tRNA(Gly) + glycine + ATP = glycyl-tRNA(Gly) + AMP + diphosphate</text>
        <dbReference type="Rhea" id="RHEA:16013"/>
        <dbReference type="Rhea" id="RHEA-COMP:9664"/>
        <dbReference type="Rhea" id="RHEA-COMP:9683"/>
        <dbReference type="ChEBI" id="CHEBI:30616"/>
        <dbReference type="ChEBI" id="CHEBI:33019"/>
        <dbReference type="ChEBI" id="CHEBI:57305"/>
        <dbReference type="ChEBI" id="CHEBI:78442"/>
        <dbReference type="ChEBI" id="CHEBI:78522"/>
        <dbReference type="ChEBI" id="CHEBI:456215"/>
        <dbReference type="EC" id="6.1.1.14"/>
    </reaction>
</comment>
<comment type="subunit">
    <text evidence="1">Tetramer of two alpha and two beta subunits.</text>
</comment>
<comment type="subcellular location">
    <subcellularLocation>
        <location evidence="1">Cytoplasm</location>
    </subcellularLocation>
</comment>
<comment type="similarity">
    <text evidence="1">Belongs to the class-II aminoacyl-tRNA synthetase family.</text>
</comment>
<proteinExistence type="inferred from homology"/>
<organism>
    <name type="scientific">Sulfurihydrogenibium sp. (strain YO3AOP1)</name>
    <dbReference type="NCBI Taxonomy" id="436114"/>
    <lineage>
        <taxon>Bacteria</taxon>
        <taxon>Pseudomonadati</taxon>
        <taxon>Aquificota</taxon>
        <taxon>Aquificia</taxon>
        <taxon>Aquificales</taxon>
        <taxon>Hydrogenothermaceae</taxon>
        <taxon>Sulfurihydrogenibium</taxon>
    </lineage>
</organism>
<feature type="chain" id="PRO_1000101240" description="Glycine--tRNA ligase alpha subunit">
    <location>
        <begin position="1"/>
        <end position="297"/>
    </location>
</feature>
<gene>
    <name evidence="1" type="primary">glyQ</name>
    <name type="ordered locus">SYO3AOP1_1052</name>
</gene>
<dbReference type="EC" id="6.1.1.14" evidence="1"/>
<dbReference type="EMBL" id="CP001080">
    <property type="protein sequence ID" value="ACD66671.1"/>
    <property type="molecule type" value="Genomic_DNA"/>
</dbReference>
<dbReference type="RefSeq" id="WP_012459739.1">
    <property type="nucleotide sequence ID" value="NC_010730.1"/>
</dbReference>
<dbReference type="SMR" id="B2V9P8"/>
<dbReference type="STRING" id="436114.SYO3AOP1_1052"/>
<dbReference type="KEGG" id="sul:SYO3AOP1_1052"/>
<dbReference type="eggNOG" id="COG0752">
    <property type="taxonomic scope" value="Bacteria"/>
</dbReference>
<dbReference type="HOGENOM" id="CLU_057066_1_0_0"/>
<dbReference type="GO" id="GO:0005829">
    <property type="term" value="C:cytosol"/>
    <property type="evidence" value="ECO:0007669"/>
    <property type="project" value="TreeGrafter"/>
</dbReference>
<dbReference type="GO" id="GO:0005524">
    <property type="term" value="F:ATP binding"/>
    <property type="evidence" value="ECO:0007669"/>
    <property type="project" value="UniProtKB-UniRule"/>
</dbReference>
<dbReference type="GO" id="GO:0004820">
    <property type="term" value="F:glycine-tRNA ligase activity"/>
    <property type="evidence" value="ECO:0007669"/>
    <property type="project" value="UniProtKB-UniRule"/>
</dbReference>
<dbReference type="GO" id="GO:0006426">
    <property type="term" value="P:glycyl-tRNA aminoacylation"/>
    <property type="evidence" value="ECO:0007669"/>
    <property type="project" value="UniProtKB-UniRule"/>
</dbReference>
<dbReference type="CDD" id="cd00733">
    <property type="entry name" value="GlyRS_alpha_core"/>
    <property type="match status" value="1"/>
</dbReference>
<dbReference type="FunFam" id="3.30.930.10:FF:000006">
    <property type="entry name" value="Glycine--tRNA ligase alpha subunit"/>
    <property type="match status" value="1"/>
</dbReference>
<dbReference type="Gene3D" id="3.30.930.10">
    <property type="entry name" value="Bira Bifunctional Protein, Domain 2"/>
    <property type="match status" value="1"/>
</dbReference>
<dbReference type="Gene3D" id="1.20.58.180">
    <property type="entry name" value="Class II aaRS and biotin synthetases, domain 2"/>
    <property type="match status" value="1"/>
</dbReference>
<dbReference type="HAMAP" id="MF_00254">
    <property type="entry name" value="Gly_tRNA_synth_alpha"/>
    <property type="match status" value="1"/>
</dbReference>
<dbReference type="InterPro" id="IPR045864">
    <property type="entry name" value="aa-tRNA-synth_II/BPL/LPL"/>
</dbReference>
<dbReference type="InterPro" id="IPR006194">
    <property type="entry name" value="Gly-tRNA-synth_heterodimer"/>
</dbReference>
<dbReference type="InterPro" id="IPR002310">
    <property type="entry name" value="Gly-tRNA_ligase_asu"/>
</dbReference>
<dbReference type="NCBIfam" id="TIGR00388">
    <property type="entry name" value="glyQ"/>
    <property type="match status" value="1"/>
</dbReference>
<dbReference type="NCBIfam" id="NF006827">
    <property type="entry name" value="PRK09348.1"/>
    <property type="match status" value="1"/>
</dbReference>
<dbReference type="PANTHER" id="PTHR30075:SF2">
    <property type="entry name" value="GLYCINE--TRNA LIGASE, CHLOROPLASTIC_MITOCHONDRIAL 2"/>
    <property type="match status" value="1"/>
</dbReference>
<dbReference type="PANTHER" id="PTHR30075">
    <property type="entry name" value="GLYCYL-TRNA SYNTHETASE"/>
    <property type="match status" value="1"/>
</dbReference>
<dbReference type="Pfam" id="PF02091">
    <property type="entry name" value="tRNA-synt_2e"/>
    <property type="match status" value="1"/>
</dbReference>
<dbReference type="PRINTS" id="PR01044">
    <property type="entry name" value="TRNASYNTHGA"/>
</dbReference>
<dbReference type="SUPFAM" id="SSF55681">
    <property type="entry name" value="Class II aaRS and biotin synthetases"/>
    <property type="match status" value="1"/>
</dbReference>
<dbReference type="PROSITE" id="PS50861">
    <property type="entry name" value="AA_TRNA_LIGASE_II_GLYAB"/>
    <property type="match status" value="1"/>
</dbReference>
<name>SYGA_SULSY</name>